<feature type="chain" id="PRO_1000086634" description="Large ribosomal subunit protein bL25">
    <location>
        <begin position="1"/>
        <end position="203"/>
    </location>
</feature>
<accession>A4SE17</accession>
<dbReference type="EMBL" id="CP000607">
    <property type="protein sequence ID" value="ABP36726.1"/>
    <property type="molecule type" value="Genomic_DNA"/>
</dbReference>
<dbReference type="SMR" id="A4SE17"/>
<dbReference type="STRING" id="290318.Cvib_0711"/>
<dbReference type="KEGG" id="pvi:Cvib_0711"/>
<dbReference type="eggNOG" id="COG1825">
    <property type="taxonomic scope" value="Bacteria"/>
</dbReference>
<dbReference type="HOGENOM" id="CLU_075939_2_1_10"/>
<dbReference type="OrthoDB" id="9786489at2"/>
<dbReference type="GO" id="GO:0022625">
    <property type="term" value="C:cytosolic large ribosomal subunit"/>
    <property type="evidence" value="ECO:0007669"/>
    <property type="project" value="TreeGrafter"/>
</dbReference>
<dbReference type="GO" id="GO:0008097">
    <property type="term" value="F:5S rRNA binding"/>
    <property type="evidence" value="ECO:0007669"/>
    <property type="project" value="InterPro"/>
</dbReference>
<dbReference type="GO" id="GO:0003735">
    <property type="term" value="F:structural constituent of ribosome"/>
    <property type="evidence" value="ECO:0007669"/>
    <property type="project" value="InterPro"/>
</dbReference>
<dbReference type="GO" id="GO:0006412">
    <property type="term" value="P:translation"/>
    <property type="evidence" value="ECO:0007669"/>
    <property type="project" value="UniProtKB-UniRule"/>
</dbReference>
<dbReference type="CDD" id="cd00495">
    <property type="entry name" value="Ribosomal_L25_TL5_CTC"/>
    <property type="match status" value="1"/>
</dbReference>
<dbReference type="Gene3D" id="2.170.120.20">
    <property type="entry name" value="Ribosomal protein L25, beta domain"/>
    <property type="match status" value="1"/>
</dbReference>
<dbReference type="Gene3D" id="2.40.240.10">
    <property type="entry name" value="Ribosomal Protein L25, Chain P"/>
    <property type="match status" value="1"/>
</dbReference>
<dbReference type="HAMAP" id="MF_01334">
    <property type="entry name" value="Ribosomal_bL25_CTC"/>
    <property type="match status" value="1"/>
</dbReference>
<dbReference type="InterPro" id="IPR020056">
    <property type="entry name" value="Rbsml_bL25/Gln-tRNA_synth_N"/>
</dbReference>
<dbReference type="InterPro" id="IPR011035">
    <property type="entry name" value="Ribosomal_bL25/Gln-tRNA_synth"/>
</dbReference>
<dbReference type="InterPro" id="IPR020057">
    <property type="entry name" value="Ribosomal_bL25_b-dom"/>
</dbReference>
<dbReference type="InterPro" id="IPR037121">
    <property type="entry name" value="Ribosomal_bL25_C"/>
</dbReference>
<dbReference type="InterPro" id="IPR001021">
    <property type="entry name" value="Ribosomal_bL25_long"/>
</dbReference>
<dbReference type="InterPro" id="IPR029751">
    <property type="entry name" value="Ribosomal_L25_dom"/>
</dbReference>
<dbReference type="InterPro" id="IPR020930">
    <property type="entry name" value="Ribosomal_uL5_bac-type"/>
</dbReference>
<dbReference type="NCBIfam" id="TIGR00731">
    <property type="entry name" value="bL25_bact_ctc"/>
    <property type="match status" value="1"/>
</dbReference>
<dbReference type="NCBIfam" id="NF004136">
    <property type="entry name" value="PRK05618.3-2"/>
    <property type="match status" value="1"/>
</dbReference>
<dbReference type="PANTHER" id="PTHR33284">
    <property type="entry name" value="RIBOSOMAL PROTEIN L25/GLN-TRNA SYNTHETASE, ANTI-CODON-BINDING DOMAIN-CONTAINING PROTEIN"/>
    <property type="match status" value="1"/>
</dbReference>
<dbReference type="PANTHER" id="PTHR33284:SF1">
    <property type="entry name" value="RIBOSOMAL PROTEIN L25_GLN-TRNA SYNTHETASE, ANTI-CODON-BINDING DOMAIN-CONTAINING PROTEIN"/>
    <property type="match status" value="1"/>
</dbReference>
<dbReference type="Pfam" id="PF01386">
    <property type="entry name" value="Ribosomal_L25p"/>
    <property type="match status" value="1"/>
</dbReference>
<dbReference type="Pfam" id="PF14693">
    <property type="entry name" value="Ribosomal_TL5_C"/>
    <property type="match status" value="1"/>
</dbReference>
<dbReference type="SUPFAM" id="SSF50715">
    <property type="entry name" value="Ribosomal protein L25-like"/>
    <property type="match status" value="1"/>
</dbReference>
<protein>
    <recommendedName>
        <fullName evidence="1">Large ribosomal subunit protein bL25</fullName>
    </recommendedName>
    <alternativeName>
        <fullName evidence="2">50S ribosomal protein L25</fullName>
    </alternativeName>
    <alternativeName>
        <fullName evidence="1">General stress protein CTC</fullName>
    </alternativeName>
</protein>
<reference key="1">
    <citation type="submission" date="2007-03" db="EMBL/GenBank/DDBJ databases">
        <title>Complete sequence of Prosthecochloris vibrioformis DSM 265.</title>
        <authorList>
            <consortium name="US DOE Joint Genome Institute"/>
            <person name="Copeland A."/>
            <person name="Lucas S."/>
            <person name="Lapidus A."/>
            <person name="Barry K."/>
            <person name="Detter J.C."/>
            <person name="Glavina del Rio T."/>
            <person name="Hammon N."/>
            <person name="Israni S."/>
            <person name="Pitluck S."/>
            <person name="Schmutz J."/>
            <person name="Larimer F."/>
            <person name="Land M."/>
            <person name="Hauser L."/>
            <person name="Mikhailova N."/>
            <person name="Li T."/>
            <person name="Overmann J."/>
            <person name="Schuster S.C."/>
            <person name="Bryant D.A."/>
            <person name="Richardson P."/>
        </authorList>
    </citation>
    <scope>NUCLEOTIDE SEQUENCE [LARGE SCALE GENOMIC DNA]</scope>
    <source>
        <strain>DSM 265 / 1930</strain>
    </source>
</reference>
<sequence length="203" mass="22266">METTVLGVQPRIIKKNDAEKIRKSGNVPAVVYHKGEETVAVSVNELELNKLVHTAESHIIDLRFPDGKVKRSFIKAVQFHPVTDRIIHTDFQLFAADEVIEMDVPVSVTGESVGVDKGGKLQILRHNLTLKGKPTDMPDHLVIDITDMEIGSIVHVKDIPAQSYENLEIMIDPETPVVSVVAPKVEVETEEAPEAAAAPEAEA</sequence>
<comment type="function">
    <text evidence="1">This is one of the proteins that binds to the 5S RNA in the ribosome where it forms part of the central protuberance.</text>
</comment>
<comment type="subunit">
    <text evidence="1">Part of the 50S ribosomal subunit; part of the 5S rRNA/L5/L18/L25 subcomplex. Contacts the 5S rRNA. Binds to the 5S rRNA independently of L5 and L18.</text>
</comment>
<comment type="similarity">
    <text evidence="1">Belongs to the bacterial ribosomal protein bL25 family. CTC subfamily.</text>
</comment>
<gene>
    <name evidence="1" type="primary">rplY</name>
    <name evidence="1" type="synonym">ctc</name>
    <name type="ordered locus">Cvib_0711</name>
</gene>
<name>RL25_CHLPM</name>
<organism>
    <name type="scientific">Chlorobium phaeovibrioides (strain DSM 265 / 1930)</name>
    <name type="common">Prosthecochloris vibrioformis (strain DSM 265)</name>
    <dbReference type="NCBI Taxonomy" id="290318"/>
    <lineage>
        <taxon>Bacteria</taxon>
        <taxon>Pseudomonadati</taxon>
        <taxon>Chlorobiota</taxon>
        <taxon>Chlorobiia</taxon>
        <taxon>Chlorobiales</taxon>
        <taxon>Chlorobiaceae</taxon>
        <taxon>Chlorobium/Pelodictyon group</taxon>
        <taxon>Chlorobium</taxon>
    </lineage>
</organism>
<proteinExistence type="inferred from homology"/>
<evidence type="ECO:0000255" key="1">
    <source>
        <dbReference type="HAMAP-Rule" id="MF_01334"/>
    </source>
</evidence>
<evidence type="ECO:0000305" key="2"/>
<keyword id="KW-0687">Ribonucleoprotein</keyword>
<keyword id="KW-0689">Ribosomal protein</keyword>
<keyword id="KW-0694">RNA-binding</keyword>
<keyword id="KW-0699">rRNA-binding</keyword>